<protein>
    <recommendedName>
        <fullName evidence="1">Pantothenate synthetase</fullName>
        <shortName evidence="1">PS</shortName>
        <ecNumber evidence="1">6.3.2.1</ecNumber>
    </recommendedName>
    <alternativeName>
        <fullName evidence="1">Pantoate--beta-alanine ligase</fullName>
    </alternativeName>
    <alternativeName>
        <fullName evidence="1">Pantoate-activating enzyme</fullName>
    </alternativeName>
</protein>
<feature type="chain" id="PRO_0000128234" description="Pantothenate synthetase">
    <location>
        <begin position="1"/>
        <end position="275"/>
    </location>
</feature>
<feature type="active site" description="Proton donor" evidence="1">
    <location>
        <position position="33"/>
    </location>
</feature>
<feature type="binding site" evidence="1">
    <location>
        <begin position="26"/>
        <end position="33"/>
    </location>
    <ligand>
        <name>ATP</name>
        <dbReference type="ChEBI" id="CHEBI:30616"/>
    </ligand>
</feature>
<feature type="binding site" evidence="1">
    <location>
        <position position="57"/>
    </location>
    <ligand>
        <name>(R)-pantoate</name>
        <dbReference type="ChEBI" id="CHEBI:15980"/>
    </ligand>
</feature>
<feature type="binding site" evidence="1">
    <location>
        <position position="57"/>
    </location>
    <ligand>
        <name>beta-alanine</name>
        <dbReference type="ChEBI" id="CHEBI:57966"/>
    </ligand>
</feature>
<feature type="binding site" evidence="1">
    <location>
        <begin position="143"/>
        <end position="146"/>
    </location>
    <ligand>
        <name>ATP</name>
        <dbReference type="ChEBI" id="CHEBI:30616"/>
    </ligand>
</feature>
<feature type="binding site" evidence="1">
    <location>
        <position position="149"/>
    </location>
    <ligand>
        <name>(R)-pantoate</name>
        <dbReference type="ChEBI" id="CHEBI:15980"/>
    </ligand>
</feature>
<feature type="binding site" evidence="1">
    <location>
        <position position="172"/>
    </location>
    <ligand>
        <name>ATP</name>
        <dbReference type="ChEBI" id="CHEBI:30616"/>
    </ligand>
</feature>
<feature type="binding site" evidence="1">
    <location>
        <begin position="180"/>
        <end position="183"/>
    </location>
    <ligand>
        <name>ATP</name>
        <dbReference type="ChEBI" id="CHEBI:30616"/>
    </ligand>
</feature>
<dbReference type="EC" id="6.3.2.1" evidence="1"/>
<dbReference type="EMBL" id="CP000009">
    <property type="protein sequence ID" value="AAW61458.1"/>
    <property type="molecule type" value="Genomic_DNA"/>
</dbReference>
<dbReference type="RefSeq" id="WP_011253240.1">
    <property type="nucleotide sequence ID" value="NC_006677.1"/>
</dbReference>
<dbReference type="SMR" id="Q5FQ88"/>
<dbReference type="STRING" id="290633.GOX1718"/>
<dbReference type="KEGG" id="gox:GOX1718"/>
<dbReference type="eggNOG" id="COG0414">
    <property type="taxonomic scope" value="Bacteria"/>
</dbReference>
<dbReference type="HOGENOM" id="CLU_047148_0_0_5"/>
<dbReference type="UniPathway" id="UPA00028">
    <property type="reaction ID" value="UER00005"/>
</dbReference>
<dbReference type="Proteomes" id="UP000006375">
    <property type="component" value="Chromosome"/>
</dbReference>
<dbReference type="GO" id="GO:0005829">
    <property type="term" value="C:cytosol"/>
    <property type="evidence" value="ECO:0007669"/>
    <property type="project" value="TreeGrafter"/>
</dbReference>
<dbReference type="GO" id="GO:0005524">
    <property type="term" value="F:ATP binding"/>
    <property type="evidence" value="ECO:0007669"/>
    <property type="project" value="UniProtKB-KW"/>
</dbReference>
<dbReference type="GO" id="GO:0004592">
    <property type="term" value="F:pantoate-beta-alanine ligase activity"/>
    <property type="evidence" value="ECO:0007669"/>
    <property type="project" value="UniProtKB-UniRule"/>
</dbReference>
<dbReference type="GO" id="GO:0015940">
    <property type="term" value="P:pantothenate biosynthetic process"/>
    <property type="evidence" value="ECO:0007669"/>
    <property type="project" value="UniProtKB-UniRule"/>
</dbReference>
<dbReference type="CDD" id="cd00560">
    <property type="entry name" value="PanC"/>
    <property type="match status" value="1"/>
</dbReference>
<dbReference type="FunFam" id="3.40.50.620:FF:000114">
    <property type="entry name" value="Pantothenate synthetase"/>
    <property type="match status" value="1"/>
</dbReference>
<dbReference type="Gene3D" id="3.40.50.620">
    <property type="entry name" value="HUPs"/>
    <property type="match status" value="1"/>
</dbReference>
<dbReference type="Gene3D" id="3.30.1300.10">
    <property type="entry name" value="Pantoate-beta-alanine ligase, C-terminal domain"/>
    <property type="match status" value="1"/>
</dbReference>
<dbReference type="HAMAP" id="MF_00158">
    <property type="entry name" value="PanC"/>
    <property type="match status" value="1"/>
</dbReference>
<dbReference type="InterPro" id="IPR004821">
    <property type="entry name" value="Cyt_trans-like"/>
</dbReference>
<dbReference type="InterPro" id="IPR003721">
    <property type="entry name" value="Pantoate_ligase"/>
</dbReference>
<dbReference type="InterPro" id="IPR042176">
    <property type="entry name" value="Pantoate_ligase_C"/>
</dbReference>
<dbReference type="InterPro" id="IPR014729">
    <property type="entry name" value="Rossmann-like_a/b/a_fold"/>
</dbReference>
<dbReference type="NCBIfam" id="TIGR00125">
    <property type="entry name" value="cyt_tran_rel"/>
    <property type="match status" value="1"/>
</dbReference>
<dbReference type="NCBIfam" id="TIGR00018">
    <property type="entry name" value="panC"/>
    <property type="match status" value="1"/>
</dbReference>
<dbReference type="PANTHER" id="PTHR21299">
    <property type="entry name" value="CYTIDYLATE KINASE/PANTOATE-BETA-ALANINE LIGASE"/>
    <property type="match status" value="1"/>
</dbReference>
<dbReference type="PANTHER" id="PTHR21299:SF1">
    <property type="entry name" value="PANTOATE--BETA-ALANINE LIGASE"/>
    <property type="match status" value="1"/>
</dbReference>
<dbReference type="Pfam" id="PF02569">
    <property type="entry name" value="Pantoate_ligase"/>
    <property type="match status" value="1"/>
</dbReference>
<dbReference type="SUPFAM" id="SSF52374">
    <property type="entry name" value="Nucleotidylyl transferase"/>
    <property type="match status" value="1"/>
</dbReference>
<proteinExistence type="inferred from homology"/>
<keyword id="KW-0067">ATP-binding</keyword>
<keyword id="KW-0963">Cytoplasm</keyword>
<keyword id="KW-0436">Ligase</keyword>
<keyword id="KW-0547">Nucleotide-binding</keyword>
<keyword id="KW-0566">Pantothenate biosynthesis</keyword>
<keyword id="KW-1185">Reference proteome</keyword>
<organism>
    <name type="scientific">Gluconobacter oxydans (strain 621H)</name>
    <name type="common">Gluconobacter suboxydans</name>
    <dbReference type="NCBI Taxonomy" id="290633"/>
    <lineage>
        <taxon>Bacteria</taxon>
        <taxon>Pseudomonadati</taxon>
        <taxon>Pseudomonadota</taxon>
        <taxon>Alphaproteobacteria</taxon>
        <taxon>Acetobacterales</taxon>
        <taxon>Acetobacteraceae</taxon>
        <taxon>Gluconobacter</taxon>
    </lineage>
</organism>
<evidence type="ECO:0000255" key="1">
    <source>
        <dbReference type="HAMAP-Rule" id="MF_00158"/>
    </source>
</evidence>
<name>PANC_GLUOX</name>
<comment type="function">
    <text evidence="1">Catalyzes the condensation of pantoate with beta-alanine in an ATP-dependent reaction via a pantoyl-adenylate intermediate.</text>
</comment>
<comment type="catalytic activity">
    <reaction evidence="1">
        <text>(R)-pantoate + beta-alanine + ATP = (R)-pantothenate + AMP + diphosphate + H(+)</text>
        <dbReference type="Rhea" id="RHEA:10912"/>
        <dbReference type="ChEBI" id="CHEBI:15378"/>
        <dbReference type="ChEBI" id="CHEBI:15980"/>
        <dbReference type="ChEBI" id="CHEBI:29032"/>
        <dbReference type="ChEBI" id="CHEBI:30616"/>
        <dbReference type="ChEBI" id="CHEBI:33019"/>
        <dbReference type="ChEBI" id="CHEBI:57966"/>
        <dbReference type="ChEBI" id="CHEBI:456215"/>
        <dbReference type="EC" id="6.3.2.1"/>
    </reaction>
</comment>
<comment type="pathway">
    <text evidence="1">Cofactor biosynthesis; (R)-pantothenate biosynthesis; (R)-pantothenate from (R)-pantoate and beta-alanine: step 1/1.</text>
</comment>
<comment type="subunit">
    <text evidence="1">Homodimer.</text>
</comment>
<comment type="subcellular location">
    <subcellularLocation>
        <location evidence="1">Cytoplasm</location>
    </subcellularLocation>
</comment>
<comment type="miscellaneous">
    <text evidence="1">The reaction proceeds by a bi uni uni bi ping pong mechanism.</text>
</comment>
<comment type="similarity">
    <text evidence="1">Belongs to the pantothenate synthetase family.</text>
</comment>
<sequence>MQVFETIGAFRAALTAYPTLGFVPTMGFLHEGHLGLVRRAKAENGAVAVSIFVNPTQFGPNEDYASYPRDPDRDLALLKEAGADLVFLPTPDVLYPPGAVTRIEVGGVANELEGQSRPGHFSGVATVVTKLFNIVQPQRAYFGQKDAQQCAVVRRFVADLDIPVEIVVCDIAREADGLARSSRNVRLTAENRQKAPALFQALQETAGLFRNGERDVDILENAMRAVLTEAGLLDIDYATVVNADTFRREQPCSDNALALLAVQAGEVRLIDNMPL</sequence>
<accession>Q5FQ88</accession>
<reference key="1">
    <citation type="journal article" date="2005" name="Nat. Biotechnol.">
        <title>Complete genome sequence of the acetic acid bacterium Gluconobacter oxydans.</title>
        <authorList>
            <person name="Prust C."/>
            <person name="Hoffmeister M."/>
            <person name="Liesegang H."/>
            <person name="Wiezer A."/>
            <person name="Fricke W.F."/>
            <person name="Ehrenreich A."/>
            <person name="Gottschalk G."/>
            <person name="Deppenmeier U."/>
        </authorList>
    </citation>
    <scope>NUCLEOTIDE SEQUENCE [LARGE SCALE GENOMIC DNA]</scope>
    <source>
        <strain>621H</strain>
    </source>
</reference>
<gene>
    <name evidence="1" type="primary">panC</name>
    <name type="ordered locus">GOX1718</name>
</gene>